<protein>
    <recommendedName>
        <fullName>Phosphoglycerate kinase</fullName>
        <ecNumber evidence="4">2.7.2.3</ecNumber>
    </recommendedName>
</protein>
<proteinExistence type="inferred from homology"/>
<evidence type="ECO:0000250" key="1"/>
<evidence type="ECO:0000250" key="2">
    <source>
        <dbReference type="UniProtKB" id="A0A7G5KET3"/>
    </source>
</evidence>
<evidence type="ECO:0000250" key="3">
    <source>
        <dbReference type="UniProtKB" id="P00558"/>
    </source>
</evidence>
<evidence type="ECO:0000250" key="4">
    <source>
        <dbReference type="UniProtKB" id="P00560"/>
    </source>
</evidence>
<evidence type="ECO:0000250" key="5">
    <source>
        <dbReference type="UniProtKB" id="Q7SIB7"/>
    </source>
</evidence>
<evidence type="ECO:0000305" key="6"/>
<reference key="1">
    <citation type="journal article" date="2004" name="Nature">
        <title>Genome evolution in yeasts.</title>
        <authorList>
            <person name="Dujon B."/>
            <person name="Sherman D."/>
            <person name="Fischer G."/>
            <person name="Durrens P."/>
            <person name="Casaregola S."/>
            <person name="Lafontaine I."/>
            <person name="de Montigny J."/>
            <person name="Marck C."/>
            <person name="Neuveglise C."/>
            <person name="Talla E."/>
            <person name="Goffard N."/>
            <person name="Frangeul L."/>
            <person name="Aigle M."/>
            <person name="Anthouard V."/>
            <person name="Babour A."/>
            <person name="Barbe V."/>
            <person name="Barnay S."/>
            <person name="Blanchin S."/>
            <person name="Beckerich J.-M."/>
            <person name="Beyne E."/>
            <person name="Bleykasten C."/>
            <person name="Boisrame A."/>
            <person name="Boyer J."/>
            <person name="Cattolico L."/>
            <person name="Confanioleri F."/>
            <person name="de Daruvar A."/>
            <person name="Despons L."/>
            <person name="Fabre E."/>
            <person name="Fairhead C."/>
            <person name="Ferry-Dumazet H."/>
            <person name="Groppi A."/>
            <person name="Hantraye F."/>
            <person name="Hennequin C."/>
            <person name="Jauniaux N."/>
            <person name="Joyet P."/>
            <person name="Kachouri R."/>
            <person name="Kerrest A."/>
            <person name="Koszul R."/>
            <person name="Lemaire M."/>
            <person name="Lesur I."/>
            <person name="Ma L."/>
            <person name="Muller H."/>
            <person name="Nicaud J.-M."/>
            <person name="Nikolski M."/>
            <person name="Oztas S."/>
            <person name="Ozier-Kalogeropoulos O."/>
            <person name="Pellenz S."/>
            <person name="Potier S."/>
            <person name="Richard G.-F."/>
            <person name="Straub M.-L."/>
            <person name="Suleau A."/>
            <person name="Swennen D."/>
            <person name="Tekaia F."/>
            <person name="Wesolowski-Louvel M."/>
            <person name="Westhof E."/>
            <person name="Wirth B."/>
            <person name="Zeniou-Meyer M."/>
            <person name="Zivanovic Y."/>
            <person name="Bolotin-Fukuhara M."/>
            <person name="Thierry A."/>
            <person name="Bouchier C."/>
            <person name="Caudron B."/>
            <person name="Scarpelli C."/>
            <person name="Gaillardin C."/>
            <person name="Weissenbach J."/>
            <person name="Wincker P."/>
            <person name="Souciet J.-L."/>
        </authorList>
    </citation>
    <scope>NUCLEOTIDE SEQUENCE [LARGE SCALE GENOMIC DNA]</scope>
    <source>
        <strain>ATCC 36239 / CBS 767 / BCRC 21394 / JCM 1990 / NBRC 0083 / IGC 2968</strain>
    </source>
</reference>
<keyword id="KW-0067">ATP-binding</keyword>
<keyword id="KW-0963">Cytoplasm</keyword>
<keyword id="KW-0324">Glycolysis</keyword>
<keyword id="KW-0418">Kinase</keyword>
<keyword id="KW-0460">Magnesium</keyword>
<keyword id="KW-0479">Metal-binding</keyword>
<keyword id="KW-0496">Mitochondrion</keyword>
<keyword id="KW-0547">Nucleotide-binding</keyword>
<keyword id="KW-1185">Reference proteome</keyword>
<keyword id="KW-0808">Transferase</keyword>
<name>PGK_DEBHA</name>
<comment type="function">
    <text evidence="2 3 4">Catalyzes one of the two ATP producing reactions in the glycolytic pathway via the reversible conversion of 1,3-diphosphoglycerate to 3-phosphoglycerate (By similarity). Both L- and D- forms of purine and pyrimidine nucleotides can be used as substrates, but the activity is much lower on pyrimidines (By similarity). Negatively regulates the biosynthesis of acetyl-CoA from pyruvate in the mitochondrion (By similarity).</text>
</comment>
<comment type="catalytic activity">
    <reaction evidence="4">
        <text>(2R)-3-phosphoglycerate + ATP = (2R)-3-phospho-glyceroyl phosphate + ADP</text>
        <dbReference type="Rhea" id="RHEA:14801"/>
        <dbReference type="ChEBI" id="CHEBI:30616"/>
        <dbReference type="ChEBI" id="CHEBI:57604"/>
        <dbReference type="ChEBI" id="CHEBI:58272"/>
        <dbReference type="ChEBI" id="CHEBI:456216"/>
        <dbReference type="EC" id="2.7.2.3"/>
    </reaction>
</comment>
<comment type="cofactor">
    <cofactor evidence="3">
        <name>Mg(2+)</name>
        <dbReference type="ChEBI" id="CHEBI:18420"/>
    </cofactor>
</comment>
<comment type="pathway">
    <text evidence="4">Carbohydrate degradation; glycolysis; pyruvate from D-glyceraldehyde 3-phosphate: step 2/5.</text>
</comment>
<comment type="subunit">
    <text evidence="1">Monomer.</text>
</comment>
<comment type="subcellular location">
    <subcellularLocation>
        <location evidence="4">Cytoplasm</location>
    </subcellularLocation>
    <subcellularLocation>
        <location evidence="4">Mitochondrion</location>
    </subcellularLocation>
</comment>
<comment type="similarity">
    <text evidence="6">Belongs to the phosphoglycerate kinase family.</text>
</comment>
<feature type="chain" id="PRO_0000145879" description="Phosphoglycerate kinase">
    <location>
        <begin position="1"/>
        <end position="416"/>
    </location>
</feature>
<feature type="binding site" evidence="3">
    <location>
        <position position="23"/>
    </location>
    <ligand>
        <name>(2R)-3-phosphoglycerate</name>
        <dbReference type="ChEBI" id="CHEBI:58272"/>
    </ligand>
</feature>
<feature type="binding site" evidence="5">
    <location>
        <position position="24"/>
    </location>
    <ligand>
        <name>(2R)-3-phosphoglycerate</name>
        <dbReference type="ChEBI" id="CHEBI:58272"/>
    </ligand>
</feature>
<feature type="binding site" evidence="3">
    <location>
        <position position="25"/>
    </location>
    <ligand>
        <name>(2R)-3-phosphoglycerate</name>
        <dbReference type="ChEBI" id="CHEBI:58272"/>
    </ligand>
</feature>
<feature type="binding site" evidence="5">
    <location>
        <position position="26"/>
    </location>
    <ligand>
        <name>(2R)-3-phosphoglycerate</name>
        <dbReference type="ChEBI" id="CHEBI:58272"/>
    </ligand>
</feature>
<feature type="binding site" evidence="3">
    <location>
        <position position="38"/>
    </location>
    <ligand>
        <name>(2R)-3-phosphoglycerate</name>
        <dbReference type="ChEBI" id="CHEBI:58272"/>
    </ligand>
</feature>
<feature type="binding site" evidence="5">
    <location>
        <position position="39"/>
    </location>
    <ligand>
        <name>(2R)-3-phosphoglycerate</name>
        <dbReference type="ChEBI" id="CHEBI:58272"/>
    </ligand>
</feature>
<feature type="binding site" evidence="3">
    <location>
        <position position="62"/>
    </location>
    <ligand>
        <name>(2R)-3-phosphoglycerate</name>
        <dbReference type="ChEBI" id="CHEBI:58272"/>
    </ligand>
</feature>
<feature type="binding site" evidence="5">
    <location>
        <position position="63"/>
    </location>
    <ligand>
        <name>(2R)-3-phosphoglycerate</name>
        <dbReference type="ChEBI" id="CHEBI:58272"/>
    </ligand>
</feature>
<feature type="binding site" evidence="3">
    <location>
        <position position="65"/>
    </location>
    <ligand>
        <name>(2R)-3-phosphoglycerate</name>
        <dbReference type="ChEBI" id="CHEBI:58272"/>
    </ligand>
</feature>
<feature type="binding site" evidence="5">
    <location>
        <position position="66"/>
    </location>
    <ligand>
        <name>(2R)-3-phosphoglycerate</name>
        <dbReference type="ChEBI" id="CHEBI:58272"/>
    </ligand>
</feature>
<feature type="binding site" evidence="3">
    <location>
        <position position="121"/>
    </location>
    <ligand>
        <name>(2R)-3-phosphoglycerate</name>
        <dbReference type="ChEBI" id="CHEBI:58272"/>
    </ligand>
</feature>
<feature type="binding site" evidence="5">
    <location>
        <position position="122"/>
    </location>
    <ligand>
        <name>(2R)-3-phosphoglycerate</name>
        <dbReference type="ChEBI" id="CHEBI:58272"/>
    </ligand>
</feature>
<feature type="binding site" evidence="3">
    <location>
        <position position="168"/>
    </location>
    <ligand>
        <name>(2R)-3-phosphoglycerate</name>
        <dbReference type="ChEBI" id="CHEBI:58272"/>
    </ligand>
</feature>
<feature type="binding site" evidence="5">
    <location>
        <position position="169"/>
    </location>
    <ligand>
        <name>(2R)-3-phosphoglycerate</name>
        <dbReference type="ChEBI" id="CHEBI:58272"/>
    </ligand>
</feature>
<feature type="binding site" evidence="3">
    <location>
        <position position="212"/>
    </location>
    <ligand>
        <name>ADP</name>
        <dbReference type="ChEBI" id="CHEBI:456216"/>
    </ligand>
</feature>
<feature type="binding site" evidence="3">
    <location>
        <position position="212"/>
    </location>
    <ligand>
        <name>CDP</name>
        <dbReference type="ChEBI" id="CHEBI:58069"/>
    </ligand>
</feature>
<feature type="binding site" evidence="5">
    <location>
        <position position="213"/>
    </location>
    <ligand>
        <name>AMP</name>
        <dbReference type="ChEBI" id="CHEBI:456215"/>
    </ligand>
</feature>
<feature type="binding site" evidence="5">
    <location>
        <position position="213"/>
    </location>
    <ligand>
        <name>ATP</name>
        <dbReference type="ChEBI" id="CHEBI:30616"/>
    </ligand>
</feature>
<feature type="binding site" evidence="3">
    <location>
        <position position="213"/>
    </location>
    <ligand>
        <name>Mg(2+)</name>
        <dbReference type="ChEBI" id="CHEBI:18420"/>
    </ligand>
</feature>
<feature type="binding site" evidence="5">
    <location>
        <position position="214"/>
    </location>
    <ligand>
        <name>AMP</name>
        <dbReference type="ChEBI" id="CHEBI:456215"/>
    </ligand>
</feature>
<feature type="binding site" evidence="3">
    <location>
        <position position="217"/>
    </location>
    <ligand>
        <name>CDP</name>
        <dbReference type="ChEBI" id="CHEBI:58069"/>
    </ligand>
</feature>
<feature type="binding site" evidence="3">
    <location>
        <position position="217"/>
    </location>
    <ligand>
        <name>Mg(2+)</name>
        <dbReference type="ChEBI" id="CHEBI:18420"/>
    </ligand>
</feature>
<feature type="binding site" evidence="5">
    <location>
        <position position="218"/>
    </location>
    <ligand>
        <name>AMP</name>
        <dbReference type="ChEBI" id="CHEBI:456215"/>
    </ligand>
</feature>
<feature type="binding site" evidence="5">
    <location>
        <position position="218"/>
    </location>
    <ligand>
        <name>ATP</name>
        <dbReference type="ChEBI" id="CHEBI:30616"/>
    </ligand>
</feature>
<feature type="binding site" evidence="3">
    <location>
        <position position="236"/>
    </location>
    <ligand>
        <name>ADP</name>
        <dbReference type="ChEBI" id="CHEBI:456216"/>
    </ligand>
</feature>
<feature type="binding site" evidence="3">
    <location>
        <position position="236"/>
    </location>
    <ligand>
        <name>CDP</name>
        <dbReference type="ChEBI" id="CHEBI:58069"/>
    </ligand>
</feature>
<feature type="binding site" evidence="5">
    <location>
        <position position="237"/>
    </location>
    <ligand>
        <name>AMP</name>
        <dbReference type="ChEBI" id="CHEBI:456215"/>
    </ligand>
</feature>
<feature type="binding site" evidence="5">
    <location>
        <position position="237"/>
    </location>
    <ligand>
        <name>ATP</name>
        <dbReference type="ChEBI" id="CHEBI:30616"/>
    </ligand>
</feature>
<feature type="binding site" evidence="5">
    <location>
        <position position="311"/>
    </location>
    <ligand>
        <name>AMP</name>
        <dbReference type="ChEBI" id="CHEBI:456215"/>
    </ligand>
</feature>
<feature type="binding site" evidence="5">
    <location>
        <position position="311"/>
    </location>
    <ligand>
        <name>ATP</name>
        <dbReference type="ChEBI" id="CHEBI:30616"/>
    </ligand>
</feature>
<feature type="binding site" evidence="3">
    <location>
        <position position="336"/>
    </location>
    <ligand>
        <name>CDP</name>
        <dbReference type="ChEBI" id="CHEBI:58069"/>
    </ligand>
</feature>
<feature type="binding site" evidence="3">
    <location>
        <position position="341"/>
    </location>
    <ligand>
        <name>ADP</name>
        <dbReference type="ChEBI" id="CHEBI:456216"/>
    </ligand>
</feature>
<feature type="binding site" evidence="3">
    <location>
        <position position="341"/>
    </location>
    <ligand>
        <name>CDP</name>
        <dbReference type="ChEBI" id="CHEBI:58069"/>
    </ligand>
</feature>
<feature type="binding site" evidence="5">
    <location>
        <position position="342"/>
    </location>
    <ligand>
        <name>AMP</name>
        <dbReference type="ChEBI" id="CHEBI:456215"/>
    </ligand>
</feature>
<feature type="binding site" evidence="5">
    <location>
        <position position="342"/>
    </location>
    <ligand>
        <name>ATP</name>
        <dbReference type="ChEBI" id="CHEBI:30616"/>
    </ligand>
</feature>
<feature type="binding site" evidence="5">
    <location>
        <position position="373"/>
    </location>
    <ligand>
        <name>ATP</name>
        <dbReference type="ChEBI" id="CHEBI:30616"/>
    </ligand>
</feature>
<feature type="binding site" evidence="5">
    <location>
        <position position="373"/>
    </location>
    <ligand>
        <name>Mg(2+)</name>
        <dbReference type="ChEBI" id="CHEBI:18420"/>
    </ligand>
</feature>
<feature type="binding site" evidence="5">
    <location>
        <position position="374"/>
    </location>
    <ligand>
        <name>ATP</name>
        <dbReference type="ChEBI" id="CHEBI:30616"/>
    </ligand>
</feature>
<organism>
    <name type="scientific">Debaryomyces hansenii (strain ATCC 36239 / CBS 767 / BCRC 21394 / JCM 1990 / NBRC 0083 / IGC 2968)</name>
    <name type="common">Yeast</name>
    <name type="synonym">Torulaspora hansenii</name>
    <dbReference type="NCBI Taxonomy" id="284592"/>
    <lineage>
        <taxon>Eukaryota</taxon>
        <taxon>Fungi</taxon>
        <taxon>Dikarya</taxon>
        <taxon>Ascomycota</taxon>
        <taxon>Saccharomycotina</taxon>
        <taxon>Pichiomycetes</taxon>
        <taxon>Debaryomycetaceae</taxon>
        <taxon>Debaryomyces</taxon>
    </lineage>
</organism>
<dbReference type="EC" id="2.7.2.3" evidence="4"/>
<dbReference type="EMBL" id="CR382138">
    <property type="protein sequence ID" value="CAG89391.1"/>
    <property type="molecule type" value="Genomic_DNA"/>
</dbReference>
<dbReference type="RefSeq" id="XP_461021.1">
    <property type="nucleotide sequence ID" value="XM_461021.1"/>
</dbReference>
<dbReference type="SMR" id="Q6BLA0"/>
<dbReference type="FunCoup" id="Q6BLA0">
    <property type="interactions" value="808"/>
</dbReference>
<dbReference type="STRING" id="284592.Q6BLA0"/>
<dbReference type="GeneID" id="2904142"/>
<dbReference type="KEGG" id="dha:DEHA2F15202g"/>
<dbReference type="eggNOG" id="KOG1367">
    <property type="taxonomic scope" value="Eukaryota"/>
</dbReference>
<dbReference type="HOGENOM" id="CLU_025427_0_2_1"/>
<dbReference type="InParanoid" id="Q6BLA0"/>
<dbReference type="OMA" id="DMIFDIG"/>
<dbReference type="OrthoDB" id="275353at2759"/>
<dbReference type="UniPathway" id="UPA00109">
    <property type="reaction ID" value="UER00185"/>
</dbReference>
<dbReference type="Proteomes" id="UP000000599">
    <property type="component" value="Chromosome F"/>
</dbReference>
<dbReference type="GO" id="GO:0005829">
    <property type="term" value="C:cytosol"/>
    <property type="evidence" value="ECO:0007669"/>
    <property type="project" value="TreeGrafter"/>
</dbReference>
<dbReference type="GO" id="GO:0005739">
    <property type="term" value="C:mitochondrion"/>
    <property type="evidence" value="ECO:0007669"/>
    <property type="project" value="UniProtKB-SubCell"/>
</dbReference>
<dbReference type="GO" id="GO:0043531">
    <property type="term" value="F:ADP binding"/>
    <property type="evidence" value="ECO:0007669"/>
    <property type="project" value="TreeGrafter"/>
</dbReference>
<dbReference type="GO" id="GO:0005524">
    <property type="term" value="F:ATP binding"/>
    <property type="evidence" value="ECO:0007669"/>
    <property type="project" value="UniProtKB-KW"/>
</dbReference>
<dbReference type="GO" id="GO:0046872">
    <property type="term" value="F:metal ion binding"/>
    <property type="evidence" value="ECO:0007669"/>
    <property type="project" value="UniProtKB-KW"/>
</dbReference>
<dbReference type="GO" id="GO:0004618">
    <property type="term" value="F:phosphoglycerate kinase activity"/>
    <property type="evidence" value="ECO:0007669"/>
    <property type="project" value="UniProtKB-EC"/>
</dbReference>
<dbReference type="GO" id="GO:0006094">
    <property type="term" value="P:gluconeogenesis"/>
    <property type="evidence" value="ECO:0007669"/>
    <property type="project" value="EnsemblFungi"/>
</dbReference>
<dbReference type="GO" id="GO:0006096">
    <property type="term" value="P:glycolytic process"/>
    <property type="evidence" value="ECO:0007669"/>
    <property type="project" value="UniProtKB-KW"/>
</dbReference>
<dbReference type="CDD" id="cd00318">
    <property type="entry name" value="Phosphoglycerate_kinase"/>
    <property type="match status" value="1"/>
</dbReference>
<dbReference type="FunFam" id="3.40.50.1260:FF:000019">
    <property type="entry name" value="Phosphoglycerate kinase 1"/>
    <property type="match status" value="1"/>
</dbReference>
<dbReference type="FunFam" id="3.40.50.1260:FF:000031">
    <property type="entry name" value="Phosphoglycerate kinase 1"/>
    <property type="match status" value="1"/>
</dbReference>
<dbReference type="Gene3D" id="3.40.50.1260">
    <property type="entry name" value="Phosphoglycerate kinase, N-terminal domain"/>
    <property type="match status" value="3"/>
</dbReference>
<dbReference type="HAMAP" id="MF_00145">
    <property type="entry name" value="Phosphoglyc_kinase"/>
    <property type="match status" value="1"/>
</dbReference>
<dbReference type="InterPro" id="IPR001576">
    <property type="entry name" value="Phosphoglycerate_kinase"/>
</dbReference>
<dbReference type="InterPro" id="IPR015911">
    <property type="entry name" value="Phosphoglycerate_kinase_CS"/>
</dbReference>
<dbReference type="InterPro" id="IPR015824">
    <property type="entry name" value="Phosphoglycerate_kinase_N"/>
</dbReference>
<dbReference type="InterPro" id="IPR036043">
    <property type="entry name" value="Phosphoglycerate_kinase_sf"/>
</dbReference>
<dbReference type="PANTHER" id="PTHR11406">
    <property type="entry name" value="PHOSPHOGLYCERATE KINASE"/>
    <property type="match status" value="1"/>
</dbReference>
<dbReference type="PANTHER" id="PTHR11406:SF0">
    <property type="entry name" value="PHOSPHOGLYCERATE KINASE"/>
    <property type="match status" value="1"/>
</dbReference>
<dbReference type="Pfam" id="PF00162">
    <property type="entry name" value="PGK"/>
    <property type="match status" value="1"/>
</dbReference>
<dbReference type="PIRSF" id="PIRSF000724">
    <property type="entry name" value="Pgk"/>
    <property type="match status" value="1"/>
</dbReference>
<dbReference type="PRINTS" id="PR00477">
    <property type="entry name" value="PHGLYCKINASE"/>
</dbReference>
<dbReference type="SUPFAM" id="SSF53748">
    <property type="entry name" value="Phosphoglycerate kinase"/>
    <property type="match status" value="1"/>
</dbReference>
<dbReference type="PROSITE" id="PS00111">
    <property type="entry name" value="PGLYCERATE_KINASE"/>
    <property type="match status" value="1"/>
</dbReference>
<accession>Q6BLA0</accession>
<sequence>MSLSNKLSVKDLDVSGKRVFIRVDFNVPLDGKTITNNQRIVAALPTIKYVLENKPKAVILASHLGRPNGEKVDKFSLAPVASELEKLLGKKVNFLDDCVGDNVEKAVNGGSDGEVFLLENLRFHIEEEGSQKKDGEKVKASGEDVKKFRQQLTNLADVYVNDAFGTAHRAHSSMVGLELPQKAAGFLMAKELEYFAKALENPVRPFLAILGGAKVSDKIQLIDNLLDKVDLLIVGGGMSFTFKKVLDNMPIGDSLFDEAGAKNVENLVAKAKKNNVKIVLPVDFITADKFDKDAKTSTATEDEGIPDNWMGLDAGPKSNELFAKTVAEAKTIVWNGPPGVFEFDNFAKGTKSLLDAAVKSAESGNTVIIGGGDTATVAKKYGVVDKLSHVSTGGGASLELLEGKELPGVVAISDKK</sequence>
<gene>
    <name type="primary">PGK1</name>
    <name type="ordered locus">DEHA2F15202g</name>
</gene>